<dbReference type="EC" id="3.2.1.8"/>
<dbReference type="EMBL" id="HQ680966">
    <property type="protein sequence ID" value="ADV31286.1"/>
    <property type="molecule type" value="Genomic_DNA"/>
</dbReference>
<dbReference type="EMBL" id="KF233758">
    <property type="protein sequence ID" value="AGW24301.1"/>
    <property type="molecule type" value="mRNA"/>
</dbReference>
<dbReference type="SMR" id="E7EF85"/>
<dbReference type="CAZy" id="CBM1">
    <property type="family name" value="Carbohydrate-Binding Module Family 1"/>
</dbReference>
<dbReference type="CAZy" id="GH11">
    <property type="family name" value="Glycoside Hydrolase Family 11"/>
</dbReference>
<dbReference type="BRENDA" id="3.2.1.8">
    <property type="organism ID" value="4629"/>
</dbReference>
<dbReference type="UniPathway" id="UPA00114"/>
<dbReference type="GO" id="GO:0005576">
    <property type="term" value="C:extracellular region"/>
    <property type="evidence" value="ECO:0007669"/>
    <property type="project" value="UniProtKB-SubCell"/>
</dbReference>
<dbReference type="GO" id="GO:0030248">
    <property type="term" value="F:cellulose binding"/>
    <property type="evidence" value="ECO:0007669"/>
    <property type="project" value="InterPro"/>
</dbReference>
<dbReference type="GO" id="GO:0031176">
    <property type="term" value="F:endo-1,4-beta-xylanase activity"/>
    <property type="evidence" value="ECO:0007669"/>
    <property type="project" value="UniProtKB-EC"/>
</dbReference>
<dbReference type="GO" id="GO:0045493">
    <property type="term" value="P:xylan catabolic process"/>
    <property type="evidence" value="ECO:0007669"/>
    <property type="project" value="UniProtKB-UniPathway"/>
</dbReference>
<dbReference type="FunFam" id="2.60.120.180:FF:000001">
    <property type="entry name" value="Endo-1,4-beta-xylanase"/>
    <property type="match status" value="1"/>
</dbReference>
<dbReference type="Gene3D" id="2.60.120.180">
    <property type="match status" value="1"/>
</dbReference>
<dbReference type="InterPro" id="IPR035971">
    <property type="entry name" value="CBD_sf"/>
</dbReference>
<dbReference type="InterPro" id="IPR000254">
    <property type="entry name" value="Cellulose-bd_dom_fun"/>
</dbReference>
<dbReference type="InterPro" id="IPR013320">
    <property type="entry name" value="ConA-like_dom_sf"/>
</dbReference>
<dbReference type="InterPro" id="IPR013319">
    <property type="entry name" value="GH11/12"/>
</dbReference>
<dbReference type="InterPro" id="IPR018208">
    <property type="entry name" value="GH11_AS_1"/>
</dbReference>
<dbReference type="InterPro" id="IPR033119">
    <property type="entry name" value="GH11_AS_2"/>
</dbReference>
<dbReference type="InterPro" id="IPR033123">
    <property type="entry name" value="GH11_dom"/>
</dbReference>
<dbReference type="InterPro" id="IPR001137">
    <property type="entry name" value="Glyco_hydro_11"/>
</dbReference>
<dbReference type="PANTHER" id="PTHR46828:SF4">
    <property type="entry name" value="ENDO-1,4-BETA-XYLANASE"/>
    <property type="match status" value="1"/>
</dbReference>
<dbReference type="PANTHER" id="PTHR46828">
    <property type="entry name" value="ENDO-1,4-BETA-XYLANASE A-RELATED"/>
    <property type="match status" value="1"/>
</dbReference>
<dbReference type="Pfam" id="PF00734">
    <property type="entry name" value="CBM_1"/>
    <property type="match status" value="1"/>
</dbReference>
<dbReference type="Pfam" id="PF00457">
    <property type="entry name" value="Glyco_hydro_11"/>
    <property type="match status" value="1"/>
</dbReference>
<dbReference type="PRINTS" id="PR00911">
    <property type="entry name" value="GLHYDRLASE11"/>
</dbReference>
<dbReference type="SMART" id="SM00236">
    <property type="entry name" value="fCBD"/>
    <property type="match status" value="1"/>
</dbReference>
<dbReference type="SUPFAM" id="SSF57180">
    <property type="entry name" value="Cellulose-binding domain"/>
    <property type="match status" value="1"/>
</dbReference>
<dbReference type="SUPFAM" id="SSF49899">
    <property type="entry name" value="Concanavalin A-like lectins/glucanases"/>
    <property type="match status" value="1"/>
</dbReference>
<dbReference type="PROSITE" id="PS00562">
    <property type="entry name" value="CBM1_1"/>
    <property type="match status" value="1"/>
</dbReference>
<dbReference type="PROSITE" id="PS51164">
    <property type="entry name" value="CBM1_2"/>
    <property type="match status" value="1"/>
</dbReference>
<dbReference type="PROSITE" id="PS00776">
    <property type="entry name" value="GH11_1"/>
    <property type="match status" value="1"/>
</dbReference>
<dbReference type="PROSITE" id="PS00777">
    <property type="entry name" value="GH11_2"/>
    <property type="match status" value="1"/>
</dbReference>
<dbReference type="PROSITE" id="PS51761">
    <property type="entry name" value="GH11_3"/>
    <property type="match status" value="1"/>
</dbReference>
<evidence type="ECO:0000255" key="1"/>
<evidence type="ECO:0000255" key="2">
    <source>
        <dbReference type="PROSITE-ProRule" id="PRU00597"/>
    </source>
</evidence>
<evidence type="ECO:0000255" key="3">
    <source>
        <dbReference type="PROSITE-ProRule" id="PRU01097"/>
    </source>
</evidence>
<evidence type="ECO:0000255" key="4">
    <source>
        <dbReference type="PROSITE-ProRule" id="PRU10062"/>
    </source>
</evidence>
<evidence type="ECO:0000255" key="5">
    <source>
        <dbReference type="PROSITE-ProRule" id="PRU10063"/>
    </source>
</evidence>
<evidence type="ECO:0000256" key="6">
    <source>
        <dbReference type="SAM" id="MobiDB-lite"/>
    </source>
</evidence>
<evidence type="ECO:0000269" key="7">
    <source>
    </source>
</evidence>
<evidence type="ECO:0000269" key="8">
    <source>
    </source>
</evidence>
<evidence type="ECO:0000305" key="9"/>
<name>XYNB_PENOX</name>
<keyword id="KW-0119">Carbohydrate metabolism</keyword>
<keyword id="KW-0326">Glycosidase</keyword>
<keyword id="KW-0378">Hydrolase</keyword>
<keyword id="KW-0624">Polysaccharide degradation</keyword>
<keyword id="KW-0964">Secreted</keyword>
<keyword id="KW-0732">Signal</keyword>
<keyword id="KW-0858">Xylan degradation</keyword>
<reference key="1">
    <citation type="journal article" date="2013" name="J. Microbiol. Biotechnol.">
        <title>Molecular cloning and heterologous expression of an acid-stable endoxylanase gene from Penicillium oxalicum in Trichoderma reesei.</title>
        <authorList>
            <person name="Wang J."/>
            <person name="Mai G."/>
            <person name="Liu G."/>
            <person name="Yu S."/>
        </authorList>
    </citation>
    <scope>NUCLEOTIDE SEQUENCE [GENOMIC DNA]</scope>
    <scope>SUBCELLULAR LOCATION</scope>
    <scope>FUNCTION</scope>
    <scope>CATALYTIC ACTIVITY</scope>
    <scope>BIOPHYSICOCHEMICAL PROPERTIES</scope>
    <source>
        <strain>B3-11-2</strain>
    </source>
</reference>
<reference key="2">
    <citation type="submission" date="2013-06" db="EMBL/GenBank/DDBJ databases">
        <authorList>
            <person name="Liao H."/>
            <person name="Xu C."/>
            <person name="Tan S."/>
            <person name="Shen Q."/>
            <person name="Xu Y."/>
        </authorList>
    </citation>
    <scope>NUCLEOTIDE SEQUENCE [MRNA]</scope>
    <source>
        <strain>GZ-2</strain>
    </source>
</reference>
<reference key="3">
    <citation type="journal article" date="2012" name="Bioresour. Technol.">
        <title>Production and characterization of acidophilic xylanolytic enzymes from Penicillium oxalicum GZ-2.</title>
        <authorList>
            <person name="Liao H."/>
            <person name="Xu C."/>
            <person name="Tan S."/>
            <person name="Wei Z."/>
            <person name="Ling N."/>
            <person name="Yu G."/>
            <person name="Raza W."/>
            <person name="Zhang R."/>
            <person name="Shen Q."/>
            <person name="Xu Y."/>
        </authorList>
    </citation>
    <scope>FUNCTION</scope>
    <scope>CATALYTIC ACTIVITY</scope>
    <scope>BIOPHYSICOCHEMICAL PROPERTIES</scope>
    <scope>INDUCTION</scope>
</reference>
<sequence length="310" mass="31282">MISLSSVAIALTTVVGALALPSDQSVNLAARQAITSSQTGTNNGYYYSFWTNGAGSVSYSNGAAGQFSVNWANQGGGDFTCGKGWNPGKAQDISFSGTFTPNGNAYLSIYGWTTGPLVEYYILENFGSYNPGNGMTHVGTLTSDGSDYDIYKHTQVNQPSIVGTSTFDQYWSIRKNKRSSGTVTTANHFSAWASHGMNLGSHNYQILSVEGYQSSGSASMTVSAGSSSSGGSGSGSGSGSGSGSGSGSQTTTAGSSTGTGTGSGSGSGSGGSGGNCAAQWGQCGGQGWNGPTCCSSGTCKASNQWYSQCL</sequence>
<proteinExistence type="evidence at protein level"/>
<comment type="function">
    <text evidence="7 8">Endo-1,4-beta-xylanase involved in the hydrolysis of xylan, a major structural heterogeneous polysaccharide found in plant biomass representing the second most abundant polysaccharide in the biosphere, after cellulose. Hydrolyzes birchwood xylan, beechwood xylan, and oat spelt xylan to produce short-chain xylooligosaccharides, xylopentaose, xylotriose, and xylobiose as the main products.</text>
</comment>
<comment type="catalytic activity">
    <reaction evidence="7 8">
        <text>Endohydrolysis of (1-&gt;4)-beta-D-xylosidic linkages in xylans.</text>
        <dbReference type="EC" id="3.2.1.8"/>
    </reaction>
</comment>
<comment type="biophysicochemical properties">
    <kinetics>
        <KM evidence="7 8">5 mg/ml for birchwood xylan</KM>
        <KM evidence="7 8">4.6 mg/ml for beechwood xylan</KM>
        <KM evidence="7 8">11.3 mg/ml for oat spelt xylan</KM>
        <Vmax evidence="7 8">2.0 umol/min/mg enzyme toward birchwood xylan</Vmax>
        <Vmax evidence="7 8">2.0 umol/min/mg enzyme toward beechwood xylan</Vmax>
        <Vmax evidence="7 8">2.5 umol/min/mg enzyme toward oat spelt xylan</Vmax>
    </kinetics>
    <phDependence>
        <text evidence="7 8">Optimum pH is 5.0.</text>
    </phDependence>
    <temperatureDependence>
        <text evidence="7 8">Optimum temperature is 50 degrees Celsius.</text>
    </temperatureDependence>
</comment>
<comment type="pathway">
    <text>Glycan degradation; xylan degradation.</text>
</comment>
<comment type="subcellular location">
    <subcellularLocation>
        <location evidence="8">Secreted</location>
    </subcellularLocation>
</comment>
<comment type="induction">
    <text evidence="7">Induced by soluble xylo-oligosaccharides, with beechwood xylan being the best inducer.</text>
</comment>
<comment type="similarity">
    <text evidence="9">Belongs to the glycosyl hydrolase 11 (cellulase G) family.</text>
</comment>
<accession>E7EF85</accession>
<protein>
    <recommendedName>
        <fullName>Endo-1,4-beta-xylanase B</fullName>
        <shortName>Xylanase B</shortName>
        <ecNumber>3.2.1.8</ecNumber>
    </recommendedName>
    <alternativeName>
        <fullName>1,4-beta-D-xylan xylanohydrolase B</fullName>
    </alternativeName>
</protein>
<gene>
    <name type="primary">xynB</name>
</gene>
<organism>
    <name type="scientific">Penicillium oxalicum</name>
    <dbReference type="NCBI Taxonomy" id="69781"/>
    <lineage>
        <taxon>Eukaryota</taxon>
        <taxon>Fungi</taxon>
        <taxon>Dikarya</taxon>
        <taxon>Ascomycota</taxon>
        <taxon>Pezizomycotina</taxon>
        <taxon>Eurotiomycetes</taxon>
        <taxon>Eurotiomycetidae</taxon>
        <taxon>Eurotiales</taxon>
        <taxon>Aspergillaceae</taxon>
        <taxon>Penicillium</taxon>
    </lineage>
</organism>
<feature type="signal peptide" evidence="1">
    <location>
        <begin position="1"/>
        <end position="19"/>
    </location>
</feature>
<feature type="chain" id="PRO_0000429615" description="Endo-1,4-beta-xylanase B">
    <location>
        <begin position="20"/>
        <end position="310"/>
    </location>
</feature>
<feature type="domain" description="GH11" evidence="3">
    <location>
        <begin position="33"/>
        <end position="223"/>
    </location>
</feature>
<feature type="domain" description="CBM1" evidence="2">
    <location>
        <begin position="275"/>
        <end position="310"/>
    </location>
</feature>
<feature type="region of interest" description="Disordered" evidence="6">
    <location>
        <begin position="218"/>
        <end position="274"/>
    </location>
</feature>
<feature type="compositionally biased region" description="Low complexity" evidence="6">
    <location>
        <begin position="218"/>
        <end position="227"/>
    </location>
</feature>
<feature type="compositionally biased region" description="Gly residues" evidence="6">
    <location>
        <begin position="228"/>
        <end position="246"/>
    </location>
</feature>
<feature type="compositionally biased region" description="Low complexity" evidence="6">
    <location>
        <begin position="247"/>
        <end position="256"/>
    </location>
</feature>
<feature type="compositionally biased region" description="Gly residues" evidence="6">
    <location>
        <begin position="257"/>
        <end position="274"/>
    </location>
</feature>
<feature type="active site" description="Nucleophile" evidence="4">
    <location>
        <position position="119"/>
    </location>
</feature>
<feature type="active site" description="Proton donor" evidence="5">
    <location>
        <position position="210"/>
    </location>
</feature>